<dbReference type="EC" id="5.1.3.2"/>
<dbReference type="EMBL" id="L77117">
    <property type="protein sequence ID" value="AAB98196.1"/>
    <property type="molecule type" value="Genomic_DNA"/>
</dbReference>
<dbReference type="PIR" id="D64326">
    <property type="entry name" value="D64326"/>
</dbReference>
<dbReference type="RefSeq" id="WP_010869707.1">
    <property type="nucleotide sequence ID" value="NC_000909.1"/>
</dbReference>
<dbReference type="SMR" id="Q57664"/>
<dbReference type="FunCoup" id="Q57664">
    <property type="interactions" value="88"/>
</dbReference>
<dbReference type="STRING" id="243232.MJ_0211"/>
<dbReference type="PaxDb" id="243232-MJ_0211"/>
<dbReference type="EnsemblBacteria" id="AAB98196">
    <property type="protein sequence ID" value="AAB98196"/>
    <property type="gene ID" value="MJ_0211"/>
</dbReference>
<dbReference type="GeneID" id="1451061"/>
<dbReference type="KEGG" id="mja:MJ_0211"/>
<dbReference type="eggNOG" id="arCOG01369">
    <property type="taxonomic scope" value="Archaea"/>
</dbReference>
<dbReference type="HOGENOM" id="CLU_007383_1_7_2"/>
<dbReference type="InParanoid" id="Q57664"/>
<dbReference type="OrthoDB" id="4907at2157"/>
<dbReference type="PhylomeDB" id="Q57664"/>
<dbReference type="UniPathway" id="UPA00214"/>
<dbReference type="Proteomes" id="UP000000805">
    <property type="component" value="Chromosome"/>
</dbReference>
<dbReference type="GO" id="GO:0003978">
    <property type="term" value="F:UDP-glucose 4-epimerase activity"/>
    <property type="evidence" value="ECO:0007669"/>
    <property type="project" value="UniProtKB-EC"/>
</dbReference>
<dbReference type="GO" id="GO:0006012">
    <property type="term" value="P:galactose metabolic process"/>
    <property type="evidence" value="ECO:0007669"/>
    <property type="project" value="UniProtKB-UniPathway"/>
</dbReference>
<dbReference type="CDD" id="cd05256">
    <property type="entry name" value="UDP_AE_SDR_e"/>
    <property type="match status" value="1"/>
</dbReference>
<dbReference type="Gene3D" id="3.40.50.720">
    <property type="entry name" value="NAD(P)-binding Rossmann-like Domain"/>
    <property type="match status" value="1"/>
</dbReference>
<dbReference type="Gene3D" id="3.90.25.10">
    <property type="entry name" value="UDP-galactose 4-epimerase, domain 1"/>
    <property type="match status" value="1"/>
</dbReference>
<dbReference type="InterPro" id="IPR001509">
    <property type="entry name" value="Epimerase_deHydtase"/>
</dbReference>
<dbReference type="InterPro" id="IPR036291">
    <property type="entry name" value="NAD(P)-bd_dom_sf"/>
</dbReference>
<dbReference type="PANTHER" id="PTHR43000">
    <property type="entry name" value="DTDP-D-GLUCOSE 4,6-DEHYDRATASE-RELATED"/>
    <property type="match status" value="1"/>
</dbReference>
<dbReference type="Pfam" id="PF01370">
    <property type="entry name" value="Epimerase"/>
    <property type="match status" value="1"/>
</dbReference>
<dbReference type="SUPFAM" id="SSF51735">
    <property type="entry name" value="NAD(P)-binding Rossmann-fold domains"/>
    <property type="match status" value="1"/>
</dbReference>
<comment type="function">
    <text evidence="1">Involved in the metabolism of galactose. Catalyzes the conversion of UDP-galactose (UDP-Gal) to UDP-glucose (UDP-Glc) through a mechanism involving the transient reduction of NAD (By similarity).</text>
</comment>
<comment type="catalytic activity">
    <reaction>
        <text>UDP-alpha-D-glucose = UDP-alpha-D-galactose</text>
        <dbReference type="Rhea" id="RHEA:22168"/>
        <dbReference type="ChEBI" id="CHEBI:58885"/>
        <dbReference type="ChEBI" id="CHEBI:66914"/>
        <dbReference type="EC" id="5.1.3.2"/>
    </reaction>
</comment>
<comment type="cofactor">
    <cofactor evidence="1">
        <name>NAD(+)</name>
        <dbReference type="ChEBI" id="CHEBI:57540"/>
    </cofactor>
</comment>
<comment type="pathway">
    <text>Carbohydrate metabolism; galactose metabolism.</text>
</comment>
<comment type="similarity">
    <text evidence="2">Belongs to the NAD(P)-dependent epimerase/dehydratase family.</text>
</comment>
<keyword id="KW-0119">Carbohydrate metabolism</keyword>
<keyword id="KW-0299">Galactose metabolism</keyword>
<keyword id="KW-0413">Isomerase</keyword>
<keyword id="KW-0520">NAD</keyword>
<keyword id="KW-1185">Reference proteome</keyword>
<protein>
    <recommendedName>
        <fullName>Putative UDP-glucose 4-epimerase</fullName>
        <ecNumber>5.1.3.2</ecNumber>
    </recommendedName>
    <alternativeName>
        <fullName>Galactowaldenase</fullName>
    </alternativeName>
    <alternativeName>
        <fullName>UDP-galactose 4-epimerase</fullName>
    </alternativeName>
</protein>
<evidence type="ECO:0000250" key="1"/>
<evidence type="ECO:0000305" key="2"/>
<proteinExistence type="inferred from homology"/>
<feature type="chain" id="PRO_0000183225" description="Putative UDP-glucose 4-epimerase">
    <location>
        <begin position="1"/>
        <end position="305"/>
    </location>
</feature>
<feature type="active site" description="Proton acceptor" evidence="1">
    <location>
        <position position="140"/>
    </location>
</feature>
<feature type="binding site" evidence="1">
    <location>
        <begin position="10"/>
        <end position="11"/>
    </location>
    <ligand>
        <name>NAD(+)</name>
        <dbReference type="ChEBI" id="CHEBI:57540"/>
    </ligand>
</feature>
<feature type="binding site" evidence="1">
    <location>
        <begin position="30"/>
        <end position="35"/>
    </location>
    <ligand>
        <name>NAD(+)</name>
        <dbReference type="ChEBI" id="CHEBI:57540"/>
    </ligand>
</feature>
<feature type="binding site" evidence="1">
    <location>
        <begin position="50"/>
        <end position="51"/>
    </location>
    <ligand>
        <name>NAD(+)</name>
        <dbReference type="ChEBI" id="CHEBI:57540"/>
    </ligand>
</feature>
<feature type="binding site" evidence="1">
    <location>
        <begin position="71"/>
        <end position="75"/>
    </location>
    <ligand>
        <name>NAD(+)</name>
        <dbReference type="ChEBI" id="CHEBI:57540"/>
    </ligand>
</feature>
<feature type="binding site" evidence="1">
    <location>
        <position position="115"/>
    </location>
    <ligand>
        <name>substrate</name>
    </ligand>
</feature>
<feature type="binding site" evidence="1">
    <location>
        <position position="140"/>
    </location>
    <ligand>
        <name>NAD(+)</name>
        <dbReference type="ChEBI" id="CHEBI:57540"/>
    </ligand>
</feature>
<feature type="binding site" evidence="1">
    <location>
        <position position="140"/>
    </location>
    <ligand>
        <name>substrate</name>
    </ligand>
</feature>
<feature type="binding site" evidence="1">
    <location>
        <position position="144"/>
    </location>
    <ligand>
        <name>NAD(+)</name>
        <dbReference type="ChEBI" id="CHEBI:57540"/>
    </ligand>
</feature>
<feature type="binding site" evidence="1">
    <location>
        <position position="169"/>
    </location>
    <ligand>
        <name>substrate</name>
    </ligand>
</feature>
<feature type="binding site" evidence="1">
    <location>
        <begin position="183"/>
        <end position="184"/>
    </location>
    <ligand>
        <name>substrate</name>
    </ligand>
</feature>
<feature type="binding site" evidence="1">
    <location>
        <begin position="198"/>
        <end position="200"/>
    </location>
    <ligand>
        <name>substrate</name>
    </ligand>
</feature>
<feature type="binding site" evidence="1">
    <location>
        <position position="207"/>
    </location>
    <ligand>
        <name>substrate</name>
    </ligand>
</feature>
<feature type="binding site" evidence="1">
    <location>
        <begin position="263"/>
        <end position="266"/>
    </location>
    <ligand>
        <name>substrate</name>
    </ligand>
</feature>
<organism>
    <name type="scientific">Methanocaldococcus jannaschii (strain ATCC 43067 / DSM 2661 / JAL-1 / JCM 10045 / NBRC 100440)</name>
    <name type="common">Methanococcus jannaschii</name>
    <dbReference type="NCBI Taxonomy" id="243232"/>
    <lineage>
        <taxon>Archaea</taxon>
        <taxon>Methanobacteriati</taxon>
        <taxon>Methanobacteriota</taxon>
        <taxon>Methanomada group</taxon>
        <taxon>Methanococci</taxon>
        <taxon>Methanococcales</taxon>
        <taxon>Methanocaldococcaceae</taxon>
        <taxon>Methanocaldococcus</taxon>
    </lineage>
</organism>
<reference key="1">
    <citation type="journal article" date="1996" name="Science">
        <title>Complete genome sequence of the methanogenic archaeon, Methanococcus jannaschii.</title>
        <authorList>
            <person name="Bult C.J."/>
            <person name="White O."/>
            <person name="Olsen G.J."/>
            <person name="Zhou L."/>
            <person name="Fleischmann R.D."/>
            <person name="Sutton G.G."/>
            <person name="Blake J.A."/>
            <person name="FitzGerald L.M."/>
            <person name="Clayton R.A."/>
            <person name="Gocayne J.D."/>
            <person name="Kerlavage A.R."/>
            <person name="Dougherty B.A."/>
            <person name="Tomb J.-F."/>
            <person name="Adams M.D."/>
            <person name="Reich C.I."/>
            <person name="Overbeek R."/>
            <person name="Kirkness E.F."/>
            <person name="Weinstock K.G."/>
            <person name="Merrick J.M."/>
            <person name="Glodek A."/>
            <person name="Scott J.L."/>
            <person name="Geoghagen N.S.M."/>
            <person name="Weidman J.F."/>
            <person name="Fuhrmann J.L."/>
            <person name="Nguyen D."/>
            <person name="Utterback T.R."/>
            <person name="Kelley J.M."/>
            <person name="Peterson J.D."/>
            <person name="Sadow P.W."/>
            <person name="Hanna M.C."/>
            <person name="Cotton M.D."/>
            <person name="Roberts K.M."/>
            <person name="Hurst M.A."/>
            <person name="Kaine B.P."/>
            <person name="Borodovsky M."/>
            <person name="Klenk H.-P."/>
            <person name="Fraser C.M."/>
            <person name="Smith H.O."/>
            <person name="Woese C.R."/>
            <person name="Venter J.C."/>
        </authorList>
    </citation>
    <scope>NUCLEOTIDE SEQUENCE [LARGE SCALE GENOMIC DNA]</scope>
    <source>
        <strain>ATCC 43067 / DSM 2661 / JAL-1 / JCM 10045 / NBRC 100440</strain>
    </source>
</reference>
<sequence>MILVTGGAGFIGSHIVDKLIENNYDVIILDNLTTGNKNNINPKAEFVNADIRDKDLDEKINFKDVEVVIHQAAQINVRNSVENPVYDGDINVLGTINILEMMRKYDIDKIVFASSGGAVYGEPNYLPVDENHPINPLSPYGLSKYVGEEYIKLYNRLYGIEYAILRYSNVYGERQDPKGEAGVISIFIDKMLKNQSPIIFGDGNQTRDFVYVGDVAKANLMALNWKNEIVNIGTGKETSVNELFDIIKHEIGFRGEAIYDKPREGEVYRIYLDIKKAESLGWKPEIDLKEGIKRVVNWMKNNNRT</sequence>
<gene>
    <name type="ordered locus">MJ0211</name>
</gene>
<name>GALE_METJA</name>
<accession>Q57664</accession>